<organismHost>
    <name type="scientific">Haloarcula hispanica</name>
    <dbReference type="NCBI Taxonomy" id="51589"/>
</organismHost>
<name>Y005_HIS1I</name>
<keyword id="KW-1185">Reference proteome</keyword>
<accession>Q25BJ0</accession>
<protein>
    <recommendedName>
        <fullName>Uncharacterized protein ORF5</fullName>
    </recommendedName>
</protein>
<gene>
    <name type="ORF">ORF5</name>
</gene>
<reference key="1">
    <citation type="journal article" date="2006" name="Virology">
        <title>His1 and His2 are distantly related, spindle-shaped haloviruses belonging to the novel virus group, Salterprovirus.</title>
        <authorList>
            <person name="Bath C."/>
            <person name="Cukalac T."/>
            <person name="Porter K."/>
            <person name="Dyall-Smith M.L."/>
        </authorList>
    </citation>
    <scope>NUCLEOTIDE SEQUENCE [GENOMIC DNA]</scope>
</reference>
<organism>
    <name type="scientific">His1 virus (isolate Australia/Victoria)</name>
    <name type="common">His1V</name>
    <name type="synonym">Haloarcula hispanica virus 1</name>
    <dbReference type="NCBI Taxonomy" id="654912"/>
    <lineage>
        <taxon>Viruses</taxon>
        <taxon>Viruses incertae sedis</taxon>
        <taxon>Halspiviridae</taxon>
        <taxon>Salterprovirus</taxon>
        <taxon>Salterprovirus His1</taxon>
    </lineage>
</organism>
<dbReference type="EMBL" id="AF191796">
    <property type="protein sequence ID" value="AAQ13720.1"/>
    <property type="molecule type" value="Genomic_DNA"/>
</dbReference>
<dbReference type="RefSeq" id="YP_529517.1">
    <property type="nucleotide sequence ID" value="NC_007914.1"/>
</dbReference>
<dbReference type="KEGG" id="vg:5142410"/>
<dbReference type="Proteomes" id="UP000007024">
    <property type="component" value="Segment"/>
</dbReference>
<proteinExistence type="predicted"/>
<feature type="chain" id="PRO_0000384875" description="Uncharacterized protein ORF5">
    <location>
        <begin position="1"/>
        <end position="15"/>
    </location>
</feature>
<sequence length="15" mass="1891">MQMQEKGWKIIIEEQ</sequence>